<protein>
    <recommendedName>
        <fullName evidence="1">Probable 4-amino-4-deoxy-L-arabinose-phosphoundecaprenol flippase subunit ArnF</fullName>
        <shortName evidence="1">L-Ara4N-phosphoundecaprenol flippase subunit ArnF</shortName>
    </recommendedName>
    <alternativeName>
        <fullName evidence="1">Undecaprenyl phosphate-aminoarabinose flippase subunit ArnF</fullName>
    </alternativeName>
</protein>
<sequence>MRGDNTGVGKEPAVTERPAIKGYLYVLGSILLVTLAQLAMKWGVMQLPAWQASLDIMLAHPVPLLVITAGVGCYALSLLCWLAALHFTPLNIAYPLLSTSYALVYLLAVSIPSFAEPLEPGKAVGVIFILLGAVLVGIKPVGRKRNAH</sequence>
<comment type="function">
    <text evidence="1">Translocates 4-amino-4-deoxy-L-arabinose-phosphoundecaprenol (alpha-L-Ara4N-phosphoundecaprenol) from the cytoplasmic to the periplasmic side of the inner membrane.</text>
</comment>
<comment type="pathway">
    <text evidence="1">Bacterial outer membrane biogenesis; lipopolysaccharide biosynthesis.</text>
</comment>
<comment type="subunit">
    <text evidence="1">Heterodimer of ArnE and ArnF.</text>
</comment>
<comment type="subcellular location">
    <subcellularLocation>
        <location evidence="1">Cell inner membrane</location>
        <topology evidence="1">Multi-pass membrane protein</topology>
    </subcellularLocation>
</comment>
<comment type="similarity">
    <text evidence="1">Belongs to the ArnF family.</text>
</comment>
<name>ARNF_AERS4</name>
<proteinExistence type="inferred from homology"/>
<gene>
    <name evidence="1" type="primary">arnF</name>
    <name type="ordered locus">ASA_3313</name>
</gene>
<keyword id="KW-0997">Cell inner membrane</keyword>
<keyword id="KW-1003">Cell membrane</keyword>
<keyword id="KW-0441">Lipid A biosynthesis</keyword>
<keyword id="KW-0444">Lipid biosynthesis</keyword>
<keyword id="KW-0443">Lipid metabolism</keyword>
<keyword id="KW-0448">Lipopolysaccharide biosynthesis</keyword>
<keyword id="KW-0472">Membrane</keyword>
<keyword id="KW-0812">Transmembrane</keyword>
<keyword id="KW-1133">Transmembrane helix</keyword>
<keyword id="KW-0813">Transport</keyword>
<feature type="chain" id="PRO_0000381995" description="Probable 4-amino-4-deoxy-L-arabinose-phosphoundecaprenol flippase subunit ArnF">
    <location>
        <begin position="1"/>
        <end position="148"/>
    </location>
</feature>
<feature type="topological domain" description="Cytoplasmic" evidence="1">
    <location>
        <begin position="1"/>
        <end position="23"/>
    </location>
</feature>
<feature type="transmembrane region" description="Helical" evidence="1">
    <location>
        <begin position="24"/>
        <end position="44"/>
    </location>
</feature>
<feature type="topological domain" description="Periplasmic" evidence="1">
    <location>
        <begin position="45"/>
        <end position="63"/>
    </location>
</feature>
<feature type="transmembrane region" description="Helical" evidence="1">
    <location>
        <begin position="64"/>
        <end position="84"/>
    </location>
</feature>
<feature type="topological domain" description="Cytoplasmic" evidence="1">
    <location>
        <begin position="85"/>
        <end position="91"/>
    </location>
</feature>
<feature type="transmembrane region" description="Helical" evidence="1">
    <location>
        <begin position="92"/>
        <end position="112"/>
    </location>
</feature>
<feature type="topological domain" description="Periplasmic" evidence="1">
    <location>
        <begin position="113"/>
        <end position="117"/>
    </location>
</feature>
<feature type="transmembrane region" description="Helical" evidence="1">
    <location>
        <begin position="118"/>
        <end position="138"/>
    </location>
</feature>
<feature type="topological domain" description="Cytoplasmic" evidence="1">
    <location>
        <begin position="139"/>
        <end position="148"/>
    </location>
</feature>
<evidence type="ECO:0000255" key="1">
    <source>
        <dbReference type="HAMAP-Rule" id="MF_00538"/>
    </source>
</evidence>
<reference key="1">
    <citation type="journal article" date="2008" name="BMC Genomics">
        <title>The genome of Aeromonas salmonicida subsp. salmonicida A449: insights into the evolution of a fish pathogen.</title>
        <authorList>
            <person name="Reith M.E."/>
            <person name="Singh R.K."/>
            <person name="Curtis B."/>
            <person name="Boyd J.M."/>
            <person name="Bouevitch A."/>
            <person name="Kimball J."/>
            <person name="Munholland J."/>
            <person name="Murphy C."/>
            <person name="Sarty D."/>
            <person name="Williams J."/>
            <person name="Nash J.H."/>
            <person name="Johnson S.C."/>
            <person name="Brown L.L."/>
        </authorList>
    </citation>
    <scope>NUCLEOTIDE SEQUENCE [LARGE SCALE GENOMIC DNA]</scope>
    <source>
        <strain>A449</strain>
    </source>
</reference>
<organism>
    <name type="scientific">Aeromonas salmonicida (strain A449)</name>
    <dbReference type="NCBI Taxonomy" id="382245"/>
    <lineage>
        <taxon>Bacteria</taxon>
        <taxon>Pseudomonadati</taxon>
        <taxon>Pseudomonadota</taxon>
        <taxon>Gammaproteobacteria</taxon>
        <taxon>Aeromonadales</taxon>
        <taxon>Aeromonadaceae</taxon>
        <taxon>Aeromonas</taxon>
    </lineage>
</organism>
<accession>A4SQX3</accession>
<dbReference type="EMBL" id="CP000644">
    <property type="protein sequence ID" value="ABO91295.1"/>
    <property type="molecule type" value="Genomic_DNA"/>
</dbReference>
<dbReference type="RefSeq" id="WP_005311772.1">
    <property type="nucleotide sequence ID" value="NC_009348.1"/>
</dbReference>
<dbReference type="STRING" id="29491.GCA_000820065_03700"/>
<dbReference type="KEGG" id="asa:ASA_3313"/>
<dbReference type="PATRIC" id="fig|382245.13.peg.3295"/>
<dbReference type="eggNOG" id="COG2076">
    <property type="taxonomic scope" value="Bacteria"/>
</dbReference>
<dbReference type="HOGENOM" id="CLU_131462_1_0_6"/>
<dbReference type="UniPathway" id="UPA00030"/>
<dbReference type="Proteomes" id="UP000000225">
    <property type="component" value="Chromosome"/>
</dbReference>
<dbReference type="GO" id="GO:0005886">
    <property type="term" value="C:plasma membrane"/>
    <property type="evidence" value="ECO:0007669"/>
    <property type="project" value="UniProtKB-SubCell"/>
</dbReference>
<dbReference type="GO" id="GO:1901505">
    <property type="term" value="F:carbohydrate derivative transmembrane transporter activity"/>
    <property type="evidence" value="ECO:0007669"/>
    <property type="project" value="InterPro"/>
</dbReference>
<dbReference type="GO" id="GO:0009245">
    <property type="term" value="P:lipid A biosynthetic process"/>
    <property type="evidence" value="ECO:0007669"/>
    <property type="project" value="UniProtKB-UniRule"/>
</dbReference>
<dbReference type="GO" id="GO:0009103">
    <property type="term" value="P:lipopolysaccharide biosynthetic process"/>
    <property type="evidence" value="ECO:0007669"/>
    <property type="project" value="UniProtKB-UniRule"/>
</dbReference>
<dbReference type="Gene3D" id="1.10.3730.20">
    <property type="match status" value="1"/>
</dbReference>
<dbReference type="HAMAP" id="MF_00538">
    <property type="entry name" value="Flippase_ArnF"/>
    <property type="match status" value="1"/>
</dbReference>
<dbReference type="InterPro" id="IPR022832">
    <property type="entry name" value="Flippase_ArnF"/>
</dbReference>
<dbReference type="InterPro" id="IPR000390">
    <property type="entry name" value="Small_drug/metabolite_transptr"/>
</dbReference>
<dbReference type="NCBIfam" id="NF002816">
    <property type="entry name" value="PRK02971.1-2"/>
    <property type="match status" value="1"/>
</dbReference>
<dbReference type="PANTHER" id="PTHR30561:SF9">
    <property type="entry name" value="4-AMINO-4-DEOXY-L-ARABINOSE-PHOSPHOUNDECAPRENOL FLIPPASE SUBUNIT ARNF-RELATED"/>
    <property type="match status" value="1"/>
</dbReference>
<dbReference type="PANTHER" id="PTHR30561">
    <property type="entry name" value="SMR FAMILY PROTON-DEPENDENT DRUG EFFLUX TRANSPORTER SUGE"/>
    <property type="match status" value="1"/>
</dbReference>
<dbReference type="SUPFAM" id="SSF103481">
    <property type="entry name" value="Multidrug resistance efflux transporter EmrE"/>
    <property type="match status" value="1"/>
</dbReference>